<feature type="chain" id="PRO_0000128045" description="Uncharacterized protein AF_1680">
    <location>
        <begin position="1"/>
        <end position="197"/>
    </location>
</feature>
<organism>
    <name type="scientific">Archaeoglobus fulgidus (strain ATCC 49558 / DSM 4304 / JCM 9628 / NBRC 100126 / VC-16)</name>
    <dbReference type="NCBI Taxonomy" id="224325"/>
    <lineage>
        <taxon>Archaea</taxon>
        <taxon>Methanobacteriati</taxon>
        <taxon>Methanobacteriota</taxon>
        <taxon>Archaeoglobi</taxon>
        <taxon>Archaeoglobales</taxon>
        <taxon>Archaeoglobaceae</taxon>
        <taxon>Archaeoglobus</taxon>
    </lineage>
</organism>
<name>Y1680_ARCFU</name>
<dbReference type="EMBL" id="AE000782">
    <property type="protein sequence ID" value="AAB89572.1"/>
    <property type="molecule type" value="Genomic_DNA"/>
</dbReference>
<dbReference type="PIR" id="G69459">
    <property type="entry name" value="G69459"/>
</dbReference>
<dbReference type="SMR" id="O28593"/>
<dbReference type="STRING" id="224325.AF_1680"/>
<dbReference type="PaxDb" id="224325-AF_1680"/>
<dbReference type="DNASU" id="1484903"/>
<dbReference type="EnsemblBacteria" id="AAB89572">
    <property type="protein sequence ID" value="AAB89572"/>
    <property type="gene ID" value="AF_1680"/>
</dbReference>
<dbReference type="KEGG" id="afu:AF_1680"/>
<dbReference type="eggNOG" id="arCOG09517">
    <property type="taxonomic scope" value="Archaea"/>
</dbReference>
<dbReference type="HOGENOM" id="CLU_1381326_0_0_2"/>
<dbReference type="Proteomes" id="UP000002199">
    <property type="component" value="Chromosome"/>
</dbReference>
<sequence>MKKFMINCFVHLKEICYLSDMDILENMVKNLLKYESEVHKLLSTYESAGKSRIIRLDESYKELDGLSIEQDELFREALRCVENGLFRAAHVLAWAGFIDFLHSILALHIPQIKNKKEKWKISKKEDFREYPDFQIIEAAKDVGILNKSEMKTLKGLLSKRNECAHPSDYFPDLNETLGYISELLKRIKILQMRIKEK</sequence>
<keyword id="KW-1185">Reference proteome</keyword>
<protein>
    <recommendedName>
        <fullName>Uncharacterized protein AF_1680</fullName>
    </recommendedName>
</protein>
<reference key="1">
    <citation type="journal article" date="1997" name="Nature">
        <title>The complete genome sequence of the hyperthermophilic, sulphate-reducing archaeon Archaeoglobus fulgidus.</title>
        <authorList>
            <person name="Klenk H.-P."/>
            <person name="Clayton R.A."/>
            <person name="Tomb J.-F."/>
            <person name="White O."/>
            <person name="Nelson K.E."/>
            <person name="Ketchum K.A."/>
            <person name="Dodson R.J."/>
            <person name="Gwinn M.L."/>
            <person name="Hickey E.K."/>
            <person name="Peterson J.D."/>
            <person name="Richardson D.L."/>
            <person name="Kerlavage A.R."/>
            <person name="Graham D.E."/>
            <person name="Kyrpides N.C."/>
            <person name="Fleischmann R.D."/>
            <person name="Quackenbush J."/>
            <person name="Lee N.H."/>
            <person name="Sutton G.G."/>
            <person name="Gill S.R."/>
            <person name="Kirkness E.F."/>
            <person name="Dougherty B.A."/>
            <person name="McKenney K."/>
            <person name="Adams M.D."/>
            <person name="Loftus B.J."/>
            <person name="Peterson S.N."/>
            <person name="Reich C.I."/>
            <person name="McNeil L.K."/>
            <person name="Badger J.H."/>
            <person name="Glodek A."/>
            <person name="Zhou L."/>
            <person name="Overbeek R."/>
            <person name="Gocayne J.D."/>
            <person name="Weidman J.F."/>
            <person name="McDonald L.A."/>
            <person name="Utterback T.R."/>
            <person name="Cotton M.D."/>
            <person name="Spriggs T."/>
            <person name="Artiach P."/>
            <person name="Kaine B.P."/>
            <person name="Sykes S.M."/>
            <person name="Sadow P.W."/>
            <person name="D'Andrea K.P."/>
            <person name="Bowman C."/>
            <person name="Fujii C."/>
            <person name="Garland S.A."/>
            <person name="Mason T.M."/>
            <person name="Olsen G.J."/>
            <person name="Fraser C.M."/>
            <person name="Smith H.O."/>
            <person name="Woese C.R."/>
            <person name="Venter J.C."/>
        </authorList>
    </citation>
    <scope>NUCLEOTIDE SEQUENCE [LARGE SCALE GENOMIC DNA]</scope>
    <source>
        <strain>ATCC 49558 / DSM 4304 / JCM 9628 / NBRC 100126 / VC-16</strain>
    </source>
</reference>
<accession>O28593</accession>
<gene>
    <name type="ordered locus">AF_1680</name>
</gene>
<proteinExistence type="predicted"/>